<keyword id="KW-1015">Disulfide bond</keyword>
<keyword id="KW-0872">Ion channel impairing toxin</keyword>
<keyword id="KW-0528">Neurotoxin</keyword>
<keyword id="KW-0632">Potassium channel impairing toxin</keyword>
<keyword id="KW-0873">Pyrrolidone carboxylic acid</keyword>
<keyword id="KW-0964">Secreted</keyword>
<keyword id="KW-0732">Signal</keyword>
<keyword id="KW-0800">Toxin</keyword>
<organism>
    <name type="scientific">Androctonus australis</name>
    <name type="common">Sahara scorpion</name>
    <dbReference type="NCBI Taxonomy" id="6858"/>
    <lineage>
        <taxon>Eukaryota</taxon>
        <taxon>Metazoa</taxon>
        <taxon>Ecdysozoa</taxon>
        <taxon>Arthropoda</taxon>
        <taxon>Chelicerata</taxon>
        <taxon>Arachnida</taxon>
        <taxon>Scorpiones</taxon>
        <taxon>Buthida</taxon>
        <taxon>Buthoidea</taxon>
        <taxon>Buthidae</taxon>
        <taxon>Androctonus</taxon>
    </lineage>
</organism>
<comment type="function">
    <text evidence="2 4">Blocker of A-type voltage-gated potassium channels of cerebellar granular cells. May also inhibit Kv4/KCND when coexpressed with DPP6 or DPP10. The occlusion of the outer entry of the K(+) conducting pore is partially reversible and affects both open and closed channels. It shares the same target in rat brain than BmTX3 (AC Q8I0L5) and AmmTX3 (AC P60208).</text>
</comment>
<comment type="subcellular location">
    <subcellularLocation>
        <location evidence="4">Secreted</location>
    </subcellularLocation>
</comment>
<comment type="tissue specificity">
    <text evidence="8">Expressed by the venom gland.</text>
</comment>
<comment type="domain">
    <text evidence="3">Has the structural arrangement of an alpha-helix connected to a beta-sheet by disulfide bonds (CSalpha/beta).</text>
</comment>
<comment type="similarity">
    <text evidence="7">Belongs to the short scorpion toxin superfamily. Potassium channel inhibitor family. Alpha-KTx 15 subfamily.</text>
</comment>
<reference key="1">
    <citation type="journal article" date="2003" name="Toxicon">
        <title>Characterisation of the genes encoding Aa1 isoforms from the scorpion Androctonus australis.</title>
        <authorList>
            <person name="Legros C."/>
            <person name="Bougis P.E."/>
            <person name="Martin-Eauclaire M.-F."/>
        </authorList>
    </citation>
    <scope>NUCLEOTIDE SEQUENCE [MRNA]</scope>
    <source>
        <tissue>Venom gland</tissue>
    </source>
</reference>
<sequence length="59" mass="6277">MKFSSIILLTLLICSMSIFGNCQVETNKKCQGGSCASVCRRVIGVAAGKCINGRCVCYP</sequence>
<proteinExistence type="inferred from homology"/>
<evidence type="ECO:0000250" key="1"/>
<evidence type="ECO:0000250" key="2">
    <source>
        <dbReference type="UniProtKB" id="P60208"/>
    </source>
</evidence>
<evidence type="ECO:0000250" key="3">
    <source>
        <dbReference type="UniProtKB" id="P84777"/>
    </source>
</evidence>
<evidence type="ECO:0000250" key="4">
    <source>
        <dbReference type="UniProtKB" id="Q867F4"/>
    </source>
</evidence>
<evidence type="ECO:0000250" key="5">
    <source>
        <dbReference type="UniProtKB" id="Q86BX0"/>
    </source>
</evidence>
<evidence type="ECO:0000250" key="6">
    <source>
        <dbReference type="UniProtKB" id="Q8I0L5"/>
    </source>
</evidence>
<evidence type="ECO:0000305" key="7"/>
<evidence type="ECO:0000305" key="8">
    <source>
    </source>
</evidence>
<feature type="signal peptide" evidence="1">
    <location>
        <begin position="1"/>
        <end position="22"/>
    </location>
</feature>
<feature type="chain" id="PRO_0000035311" description="Potassium channel toxin alpha-KTx 15.5">
    <location>
        <begin position="23"/>
        <end position="59"/>
    </location>
</feature>
<feature type="site" description="Basic residue of the functional dyad" evidence="1">
    <location>
        <position position="49"/>
    </location>
</feature>
<feature type="site" description="Aromatic residue of the functional dyad" evidence="1">
    <location>
        <position position="58"/>
    </location>
</feature>
<feature type="modified residue" description="Pyrrolidone carboxylic acid" evidence="6">
    <location>
        <position position="23"/>
    </location>
</feature>
<feature type="disulfide bond" evidence="5">
    <location>
        <begin position="30"/>
        <end position="50"/>
    </location>
</feature>
<feature type="disulfide bond" evidence="5">
    <location>
        <begin position="35"/>
        <end position="55"/>
    </location>
</feature>
<feature type="disulfide bond" evidence="5">
    <location>
        <begin position="39"/>
        <end position="57"/>
    </location>
</feature>
<accession>Q86SD8</accession>
<name>KA155_ANDAU</name>
<dbReference type="EMBL" id="AJ427744">
    <property type="protein sequence ID" value="CAD20743.1"/>
    <property type="molecule type" value="mRNA"/>
</dbReference>
<dbReference type="SMR" id="Q86SD8"/>
<dbReference type="GO" id="GO:0005576">
    <property type="term" value="C:extracellular region"/>
    <property type="evidence" value="ECO:0007669"/>
    <property type="project" value="UniProtKB-SubCell"/>
</dbReference>
<dbReference type="GO" id="GO:0008200">
    <property type="term" value="F:ion channel inhibitor activity"/>
    <property type="evidence" value="ECO:0007669"/>
    <property type="project" value="InterPro"/>
</dbReference>
<dbReference type="GO" id="GO:0015459">
    <property type="term" value="F:potassium channel regulator activity"/>
    <property type="evidence" value="ECO:0007669"/>
    <property type="project" value="UniProtKB-KW"/>
</dbReference>
<dbReference type="GO" id="GO:0090729">
    <property type="term" value="F:toxin activity"/>
    <property type="evidence" value="ECO:0007669"/>
    <property type="project" value="UniProtKB-KW"/>
</dbReference>
<dbReference type="Gene3D" id="3.30.30.10">
    <property type="entry name" value="Knottin, scorpion toxin-like"/>
    <property type="match status" value="1"/>
</dbReference>
<dbReference type="InterPro" id="IPR036574">
    <property type="entry name" value="Scorpion_toxin-like_sf"/>
</dbReference>
<dbReference type="InterPro" id="IPR001947">
    <property type="entry name" value="Scorpion_toxinS_K_inh"/>
</dbReference>
<dbReference type="Pfam" id="PF00451">
    <property type="entry name" value="Toxin_2"/>
    <property type="match status" value="1"/>
</dbReference>
<dbReference type="SUPFAM" id="SSF57095">
    <property type="entry name" value="Scorpion toxin-like"/>
    <property type="match status" value="1"/>
</dbReference>
<dbReference type="PROSITE" id="PS01138">
    <property type="entry name" value="SCORP_SHORT_TOXIN"/>
    <property type="match status" value="1"/>
</dbReference>
<protein>
    <recommendedName>
        <fullName>Potassium channel toxin alpha-KTx 15.5</fullName>
    </recommendedName>
    <alternativeName>
        <fullName>Toxin AaTX2</fullName>
    </alternativeName>
</protein>